<gene>
    <name type="primary">car</name>
    <name type="synonym">htr11</name>
    <name type="ordered locus">OE_5243F</name>
</gene>
<dbReference type="EMBL" id="AJ132321">
    <property type="protein sequence ID" value="CAB38318.1"/>
    <property type="molecule type" value="Genomic_DNA"/>
</dbReference>
<dbReference type="EMBL" id="AM774418">
    <property type="protein sequence ID" value="CAP15586.1"/>
    <property type="molecule type" value="Genomic_DNA"/>
</dbReference>
<dbReference type="PIR" id="T44849">
    <property type="entry name" value="T44849"/>
</dbReference>
<dbReference type="RefSeq" id="WP_012289648.1">
    <property type="nucleotide sequence ID" value="NC_010368.1"/>
</dbReference>
<dbReference type="SMR" id="B0R9Z1"/>
<dbReference type="EnsemblBacteria" id="CAP15586">
    <property type="protein sequence ID" value="CAP15586"/>
    <property type="gene ID" value="OE_5243F"/>
</dbReference>
<dbReference type="GeneID" id="68695268"/>
<dbReference type="KEGG" id="hsl:OE_5243F"/>
<dbReference type="HOGENOM" id="CLU_000445_116_1_2"/>
<dbReference type="PhylomeDB" id="B0R9Z1"/>
<dbReference type="Proteomes" id="UP000001321">
    <property type="component" value="Plasmid PHS3"/>
</dbReference>
<dbReference type="GO" id="GO:0005737">
    <property type="term" value="C:cytoplasm"/>
    <property type="evidence" value="ECO:0007669"/>
    <property type="project" value="UniProtKB-SubCell"/>
</dbReference>
<dbReference type="GO" id="GO:0016020">
    <property type="term" value="C:membrane"/>
    <property type="evidence" value="ECO:0007669"/>
    <property type="project" value="InterPro"/>
</dbReference>
<dbReference type="GO" id="GO:0004888">
    <property type="term" value="F:transmembrane signaling receptor activity"/>
    <property type="evidence" value="ECO:0007669"/>
    <property type="project" value="InterPro"/>
</dbReference>
<dbReference type="GO" id="GO:0006935">
    <property type="term" value="P:chemotaxis"/>
    <property type="evidence" value="ECO:0007669"/>
    <property type="project" value="UniProtKB-KW"/>
</dbReference>
<dbReference type="GO" id="GO:0007165">
    <property type="term" value="P:signal transduction"/>
    <property type="evidence" value="ECO:0007669"/>
    <property type="project" value="UniProtKB-KW"/>
</dbReference>
<dbReference type="CDD" id="cd11386">
    <property type="entry name" value="MCP_signal"/>
    <property type="match status" value="1"/>
</dbReference>
<dbReference type="CDD" id="cd00130">
    <property type="entry name" value="PAS"/>
    <property type="match status" value="1"/>
</dbReference>
<dbReference type="Gene3D" id="1.10.287.950">
    <property type="entry name" value="Methyl-accepting chemotaxis protein"/>
    <property type="match status" value="1"/>
</dbReference>
<dbReference type="Gene3D" id="3.30.450.20">
    <property type="entry name" value="PAS domain"/>
    <property type="match status" value="1"/>
</dbReference>
<dbReference type="InterPro" id="IPR004090">
    <property type="entry name" value="Chemotax_Me-accpt_rcpt"/>
</dbReference>
<dbReference type="InterPro" id="IPR004089">
    <property type="entry name" value="MCPsignal_dom"/>
</dbReference>
<dbReference type="InterPro" id="IPR000014">
    <property type="entry name" value="PAS"/>
</dbReference>
<dbReference type="InterPro" id="IPR035965">
    <property type="entry name" value="PAS-like_dom_sf"/>
</dbReference>
<dbReference type="InterPro" id="IPR013656">
    <property type="entry name" value="PAS_4"/>
</dbReference>
<dbReference type="NCBIfam" id="TIGR00229">
    <property type="entry name" value="sensory_box"/>
    <property type="match status" value="1"/>
</dbReference>
<dbReference type="PANTHER" id="PTHR32089:SF112">
    <property type="entry name" value="LYSOZYME-LIKE PROTEIN-RELATED"/>
    <property type="match status" value="1"/>
</dbReference>
<dbReference type="PANTHER" id="PTHR32089">
    <property type="entry name" value="METHYL-ACCEPTING CHEMOTAXIS PROTEIN MCPB"/>
    <property type="match status" value="1"/>
</dbReference>
<dbReference type="Pfam" id="PF00015">
    <property type="entry name" value="MCPsignal"/>
    <property type="match status" value="1"/>
</dbReference>
<dbReference type="Pfam" id="PF08448">
    <property type="entry name" value="PAS_4"/>
    <property type="match status" value="1"/>
</dbReference>
<dbReference type="PRINTS" id="PR00260">
    <property type="entry name" value="CHEMTRNSDUCR"/>
</dbReference>
<dbReference type="SMART" id="SM00283">
    <property type="entry name" value="MA"/>
    <property type="match status" value="1"/>
</dbReference>
<dbReference type="SMART" id="SM00091">
    <property type="entry name" value="PAS"/>
    <property type="match status" value="1"/>
</dbReference>
<dbReference type="SUPFAM" id="SSF58104">
    <property type="entry name" value="Methyl-accepting chemotaxis protein (MCP) signaling domain"/>
    <property type="match status" value="1"/>
</dbReference>
<dbReference type="SUPFAM" id="SSF55785">
    <property type="entry name" value="PYP-like sensor domain (PAS domain)"/>
    <property type="match status" value="1"/>
</dbReference>
<dbReference type="PROSITE" id="PS50111">
    <property type="entry name" value="CHEMOTAXIS_TRANSDUC_2"/>
    <property type="match status" value="1"/>
</dbReference>
<evidence type="ECO:0000255" key="1">
    <source>
        <dbReference type="PROSITE-ProRule" id="PRU00284"/>
    </source>
</evidence>
<evidence type="ECO:0000256" key="2">
    <source>
        <dbReference type="SAM" id="MobiDB-lite"/>
    </source>
</evidence>
<evidence type="ECO:0000269" key="3">
    <source>
    </source>
</evidence>
<evidence type="ECO:0000269" key="4">
    <source>
    </source>
</evidence>
<evidence type="ECO:0000269" key="5">
    <source>
    </source>
</evidence>
<evidence type="ECO:0000305" key="6"/>
<geneLocation type="plasmid">
    <name>PHS3</name>
</geneLocation>
<name>CAR_HALS3</name>
<comment type="function">
    <text evidence="3">Mediates chemotaxis towards arginine. Probably transduces the signal to the histidine kinase CheA.</text>
</comment>
<comment type="subunit">
    <text evidence="5">Interacts with CheW2.</text>
</comment>
<comment type="subcellular location">
    <subcellularLocation>
        <location evidence="3">Cytoplasm</location>
    </subcellularLocation>
</comment>
<comment type="PTM">
    <text evidence="4">Methylated by CheR.</text>
</comment>
<comment type="disruption phenotype">
    <text evidence="3">Mutants lose the chemotactic response towards arginine, but they still respond to leucine.</text>
</comment>
<comment type="similarity">
    <text evidence="6">Belongs to the methyl-accepting chemotaxis (MCP) protein family.</text>
</comment>
<proteinExistence type="evidence at protein level"/>
<feature type="chain" id="PRO_0000428990" description="Transducer protein Car">
    <location>
        <begin position="1"/>
        <end position="452"/>
    </location>
</feature>
<feature type="domain" description="PAS">
    <location>
        <begin position="47"/>
        <end position="121"/>
    </location>
</feature>
<feature type="domain" description="Methyl-accepting transducer" evidence="1">
    <location>
        <begin position="180"/>
        <end position="416"/>
    </location>
</feature>
<feature type="region of interest" description="Disordered" evidence="2">
    <location>
        <begin position="229"/>
        <end position="250"/>
    </location>
</feature>
<feature type="compositionally biased region" description="Low complexity" evidence="2">
    <location>
        <begin position="229"/>
        <end position="239"/>
    </location>
</feature>
<sequence length="452" mass="49099">MDPASSDMGGEATGEHLADELCEAYLGDNEDDGGDELQRLSRERDFWKHMFNQLVAEYPEGILITAADGTVTHWNERFSDHMKMARSDALGEDASDVFSTAEESETLPEAVVRTGDTVEEEEPHDVPTDSLCQYHGVPLRAPTGDVVGSFGVVPDISEKVKNQRELHDLHETVSSNVGEHLSELSESIDEVGSFAEETEAFAGEEIERMEGVADEVSNQSATIEEIASSAEEVSQASQRAQDRATEGEQTAETAIDRMGAVQESAERVNDTIDGLTSQADEMSEIIDAINDIADQTNMLALNASIEAARAGEKGEGFAVVADEVKSLAEESQERADEIEQMIVEMVETTDQTADRIGQTTTEIEEAITAVRETLDSLQEIRKAVDETATGVKEVAGATDDHAASTEQVAATTDEAVDKLTELEDRLDNLSQIASEQHDRVAEIEDMVDELVE</sequence>
<protein>
    <recommendedName>
        <fullName>Transducer protein Car</fullName>
    </recommendedName>
    <alternativeName>
        <fullName>Cytoplasmic arginine transducer protein</fullName>
    </alternativeName>
</protein>
<reference key="1">
    <citation type="journal article" date="1999" name="EMBO J.">
        <title>Car: a cytoplasmic sensor responsible for arginine chemotaxis in the archaeon Halobacterium salinarum.</title>
        <authorList>
            <person name="Storch K.F."/>
            <person name="Rudolph J."/>
            <person name="Oesterhelt D."/>
        </authorList>
    </citation>
    <scope>NUCLEOTIDE SEQUENCE [GENOMIC DNA]</scope>
    <scope>FUNCTION</scope>
    <scope>SUBCELLULAR LOCATION</scope>
    <scope>DISRUPTION PHENOTYPE</scope>
    <scope>GENE NAME</scope>
    <source>
        <strain>R1 / S9</strain>
    </source>
</reference>
<reference key="2">
    <citation type="journal article" date="2008" name="Genomics">
        <title>Evolution in the laboratory: the genome of Halobacterium salinarum strain R1 compared to that of strain NRC-1.</title>
        <authorList>
            <person name="Pfeiffer F."/>
            <person name="Schuster S.C."/>
            <person name="Broicher A."/>
            <person name="Falb M."/>
            <person name="Palm P."/>
            <person name="Rodewald K."/>
            <person name="Ruepp A."/>
            <person name="Soppa J."/>
            <person name="Tittor J."/>
            <person name="Oesterhelt D."/>
        </authorList>
    </citation>
    <scope>NUCLEOTIDE SEQUENCE [LARGE SCALE GENOMIC DNA]</scope>
    <source>
        <strain>ATCC 29341 / DSM 671 / R1</strain>
        <plasmid>PHS3</plasmid>
    </source>
</reference>
<reference key="3">
    <citation type="journal article" date="2008" name="J. Mol. Biol.">
        <title>Physiological sites of deamidation and methyl esterification in sensory transducers of Halobacterium salinarum.</title>
        <authorList>
            <person name="Koch M.K."/>
            <person name="Staudinger W.F."/>
            <person name="Siedler F."/>
            <person name="Oesterhelt D."/>
        </authorList>
    </citation>
    <scope>METHYLATION</scope>
    <source>
        <strain>R1 / S9</strain>
    </source>
</reference>
<reference key="4">
    <citation type="journal article" date="2012" name="BMC Microbiol.">
        <title>The protein interaction network of a taxis signal transduction system in a halophilic archaeon.</title>
        <authorList>
            <person name="Schlesner M."/>
            <person name="Miller A."/>
            <person name="Besir H."/>
            <person name="Aivaliotis M."/>
            <person name="Streif J."/>
            <person name="Scheffer B."/>
            <person name="Siedler F."/>
            <person name="Oesterhelt D."/>
        </authorList>
    </citation>
    <scope>INTERACTION WITH CHEW2</scope>
    <source>
        <strain>ATCC 29341 / DSM 671 / R1</strain>
    </source>
</reference>
<accession>B0R9Z1</accession>
<accession>O93775</accession>
<organism>
    <name type="scientific">Halobacterium salinarum (strain ATCC 29341 / DSM 671 / R1)</name>
    <dbReference type="NCBI Taxonomy" id="478009"/>
    <lineage>
        <taxon>Archaea</taxon>
        <taxon>Methanobacteriati</taxon>
        <taxon>Methanobacteriota</taxon>
        <taxon>Stenosarchaea group</taxon>
        <taxon>Halobacteria</taxon>
        <taxon>Halobacteriales</taxon>
        <taxon>Halobacteriaceae</taxon>
        <taxon>Halobacterium</taxon>
        <taxon>Halobacterium salinarum NRC-34001</taxon>
    </lineage>
</organism>
<keyword id="KW-0145">Chemotaxis</keyword>
<keyword id="KW-0963">Cytoplasm</keyword>
<keyword id="KW-0488">Methylation</keyword>
<keyword id="KW-0614">Plasmid</keyword>
<keyword id="KW-0807">Transducer</keyword>